<dbReference type="EC" id="3.4.22.-"/>
<dbReference type="EMBL" id="AY570550">
    <property type="protein sequence ID" value="AAS78582.1"/>
    <property type="molecule type" value="mRNA"/>
</dbReference>
<dbReference type="EMBL" id="AY570551">
    <property type="protein sequence ID" value="AAS78583.1"/>
    <property type="molecule type" value="mRNA"/>
</dbReference>
<dbReference type="RefSeq" id="NP_001001170.1">
    <molecule id="Q6PZ03-1"/>
    <property type="nucleotide sequence ID" value="NM_001001170.1"/>
</dbReference>
<dbReference type="SMR" id="Q6PZ03"/>
<dbReference type="FunCoup" id="Q6PZ03">
    <property type="interactions" value="3954"/>
</dbReference>
<dbReference type="STRING" id="9913.ENSBTAP00000020474"/>
<dbReference type="MEROPS" id="C54.003"/>
<dbReference type="PaxDb" id="9913-ENSBTAP00000020474"/>
<dbReference type="GeneID" id="408002"/>
<dbReference type="KEGG" id="bta:408002"/>
<dbReference type="CTD" id="23192"/>
<dbReference type="VEuPathDB" id="HostDB:ENSBTAG00000015401"/>
<dbReference type="eggNOG" id="KOG2674">
    <property type="taxonomic scope" value="Eukaryota"/>
</dbReference>
<dbReference type="InParanoid" id="Q6PZ03"/>
<dbReference type="OMA" id="PDETFHC"/>
<dbReference type="OrthoDB" id="2960936at2759"/>
<dbReference type="Reactome" id="R-BTA-1632852">
    <property type="pathway name" value="Macroautophagy"/>
</dbReference>
<dbReference type="Proteomes" id="UP000009136">
    <property type="component" value="Chromosome 3"/>
</dbReference>
<dbReference type="Bgee" id="ENSBTAG00000015401">
    <property type="expression patterns" value="Expressed in retina and 104 other cell types or tissues"/>
</dbReference>
<dbReference type="GO" id="GO:0005776">
    <property type="term" value="C:autophagosome"/>
    <property type="evidence" value="ECO:0007669"/>
    <property type="project" value="UniProtKB-SubCell"/>
</dbReference>
<dbReference type="GO" id="GO:0005737">
    <property type="term" value="C:cytoplasm"/>
    <property type="evidence" value="ECO:0000318"/>
    <property type="project" value="GO_Central"/>
</dbReference>
<dbReference type="GO" id="GO:0031410">
    <property type="term" value="C:cytoplasmic vesicle"/>
    <property type="evidence" value="ECO:0007669"/>
    <property type="project" value="UniProtKB-KW"/>
</dbReference>
<dbReference type="GO" id="GO:0005829">
    <property type="term" value="C:cytosol"/>
    <property type="evidence" value="ECO:0007669"/>
    <property type="project" value="UniProtKB-SubCell"/>
</dbReference>
<dbReference type="GO" id="GO:0005783">
    <property type="term" value="C:endoplasmic reticulum"/>
    <property type="evidence" value="ECO:0007669"/>
    <property type="project" value="UniProtKB-SubCell"/>
</dbReference>
<dbReference type="GO" id="GO:0005739">
    <property type="term" value="C:mitochondrion"/>
    <property type="evidence" value="ECO:0007669"/>
    <property type="project" value="UniProtKB-SubCell"/>
</dbReference>
<dbReference type="GO" id="GO:0004197">
    <property type="term" value="F:cysteine-type endopeptidase activity"/>
    <property type="evidence" value="ECO:0000318"/>
    <property type="project" value="GO_Central"/>
</dbReference>
<dbReference type="GO" id="GO:0019786">
    <property type="term" value="F:protein-phosphatidylethanolamide deconjugating activity"/>
    <property type="evidence" value="ECO:0000318"/>
    <property type="project" value="GO_Central"/>
</dbReference>
<dbReference type="GO" id="GO:0035973">
    <property type="term" value="P:aggrephagy"/>
    <property type="evidence" value="ECO:0000318"/>
    <property type="project" value="GO_Central"/>
</dbReference>
<dbReference type="GO" id="GO:0000045">
    <property type="term" value="P:autophagosome assembly"/>
    <property type="evidence" value="ECO:0000318"/>
    <property type="project" value="GO_Central"/>
</dbReference>
<dbReference type="GO" id="GO:0006914">
    <property type="term" value="P:autophagy"/>
    <property type="evidence" value="ECO:0000250"/>
    <property type="project" value="UniProtKB"/>
</dbReference>
<dbReference type="GO" id="GO:0016237">
    <property type="term" value="P:microautophagy"/>
    <property type="evidence" value="ECO:0000250"/>
    <property type="project" value="UniProtKB"/>
</dbReference>
<dbReference type="GO" id="GO:0000423">
    <property type="term" value="P:mitophagy"/>
    <property type="evidence" value="ECO:0000250"/>
    <property type="project" value="UniProtKB"/>
</dbReference>
<dbReference type="GO" id="GO:0031173">
    <property type="term" value="P:otolith mineralization completed early in development"/>
    <property type="evidence" value="ECO:0000250"/>
    <property type="project" value="UniProtKB"/>
</dbReference>
<dbReference type="GO" id="GO:0034727">
    <property type="term" value="P:piecemeal microautophagy of the nucleus"/>
    <property type="evidence" value="ECO:0000318"/>
    <property type="project" value="GO_Central"/>
</dbReference>
<dbReference type="GO" id="GO:0016485">
    <property type="term" value="P:protein processing"/>
    <property type="evidence" value="ECO:0000318"/>
    <property type="project" value="GO_Central"/>
</dbReference>
<dbReference type="GO" id="GO:0015031">
    <property type="term" value="P:protein transport"/>
    <property type="evidence" value="ECO:0007669"/>
    <property type="project" value="UniProtKB-KW"/>
</dbReference>
<dbReference type="InterPro" id="IPR046793">
    <property type="entry name" value="ATG4_LIR"/>
</dbReference>
<dbReference type="InterPro" id="IPR038765">
    <property type="entry name" value="Papain-like_cys_pep_sf"/>
</dbReference>
<dbReference type="InterPro" id="IPR005078">
    <property type="entry name" value="Peptidase_C54"/>
</dbReference>
<dbReference type="InterPro" id="IPR046792">
    <property type="entry name" value="Peptidase_C54_cat"/>
</dbReference>
<dbReference type="PANTHER" id="PTHR22624">
    <property type="entry name" value="CYSTEINE PROTEASE ATG4"/>
    <property type="match status" value="1"/>
</dbReference>
<dbReference type="PANTHER" id="PTHR22624:SF39">
    <property type="entry name" value="CYSTEINE PROTEASE ATG4B"/>
    <property type="match status" value="1"/>
</dbReference>
<dbReference type="Pfam" id="PF20166">
    <property type="entry name" value="ATG4_LIR"/>
    <property type="match status" value="1"/>
</dbReference>
<dbReference type="Pfam" id="PF03416">
    <property type="entry name" value="Peptidase_C54"/>
    <property type="match status" value="1"/>
</dbReference>
<dbReference type="SUPFAM" id="SSF54001">
    <property type="entry name" value="Cysteine proteinases"/>
    <property type="match status" value="1"/>
</dbReference>
<organism>
    <name type="scientific">Bos taurus</name>
    <name type="common">Bovine</name>
    <dbReference type="NCBI Taxonomy" id="9913"/>
    <lineage>
        <taxon>Eukaryota</taxon>
        <taxon>Metazoa</taxon>
        <taxon>Chordata</taxon>
        <taxon>Craniata</taxon>
        <taxon>Vertebrata</taxon>
        <taxon>Euteleostomi</taxon>
        <taxon>Mammalia</taxon>
        <taxon>Eutheria</taxon>
        <taxon>Laurasiatheria</taxon>
        <taxon>Artiodactyla</taxon>
        <taxon>Ruminantia</taxon>
        <taxon>Pecora</taxon>
        <taxon>Bovidae</taxon>
        <taxon>Bovinae</taxon>
        <taxon>Bos</taxon>
    </lineage>
</organism>
<accession>Q6PZ03</accession>
<accession>Q6PZ04</accession>
<reference key="1">
    <citation type="journal article" date="2004" name="J. Virol.">
        <title>Processing of a pestivirus protein by a cellular protease specific for light chain 3 of microtubule-associated proteins.</title>
        <authorList>
            <person name="Fricke J."/>
            <person name="Voss C."/>
            <person name="Thumm M."/>
            <person name="Meyers G."/>
        </authorList>
    </citation>
    <scope>NUCLEOTIDE SEQUENCE [MRNA] (ISOFORMS 1 AND 2)</scope>
    <scope>FUNCTION (MICROBIAL INFECTION)</scope>
</reference>
<protein>
    <recommendedName>
        <fullName>Cysteine protease ATG4B</fullName>
        <ecNumber>3.4.22.-</ecNumber>
    </recommendedName>
    <alternativeName>
        <fullName>Autophagy-related cysteine endopeptidase 2B</fullName>
        <shortName>Autophagin-2B</shortName>
        <shortName evidence="4">bAut2B</shortName>
    </alternativeName>
    <alternativeName>
        <fullName>Autophagy-related protein 4 homolog B</fullName>
    </alternativeName>
</protein>
<comment type="function">
    <text evidence="2">Cysteine protease that plays a key role in autophagy by mediating both proteolytic activation and delipidation of ATG8 family proteins. Required for canonical autophagy (macroautophagy), non-canonical autophagy as well as for mitophagy. The protease activity is required for proteolytic activation of ATG8 family proteins: cleaves the C-terminal amino acid of ATG8 proteins MAP1LC3A, MAP1LC3B, MAP1LC3C, GABARAPL1, GABARAPL2 and GABARAP, to reveal a C-terminal glycine. Exposure of the glycine at the C-terminus is essential for ATG8 proteins conjugation to phosphatidylethanolamine (PE) and insertion to membranes, which is necessary for autophagy. Protease activity is also required to counteract formation of high-molecular weight conjugates of ATG8 proteins (ATG8ylation): acts as a deubiquitinating-like enzyme that removes ATG8 conjugated to other proteins, such as ATG3. In addition to the protease activity, also mediates delipidation of ATG8 family proteins. Catalyzes delipidation of PE-conjugated forms of ATG8 proteins during macroautophagy. Also involved in non-canonical autophagy, a parallel pathway involving conjugation of ATG8 proteins to single membranes at endolysosomal compartments, by catalyzing delipidation of ATG8 proteins conjugated to phosphatidylserine (PS). Compared to other members of the family (ATG4A, ATG4C or ATG4C), constitutes the major protein for proteolytic activation of ATG8 proteins, while it displays weaker delipidation activity than other ATG4 paralogs. Involved in phagophore growth during mitophagy independently of its protease activity and of ATG8 proteins: acts by regulating ATG9A trafficking to mitochondria and promoting phagophore-endoplasmic reticulum contacts during the lipid transfer phase of mitophagy.</text>
</comment>
<comment type="function">
    <text evidence="3">(Microbial infection) Mediates cleavage of an ATG8 protein homolog coded in the genome of cytopathogenic bovine viral diarrhea virus (BVDV).</text>
</comment>
<comment type="catalytic activity">
    <reaction evidence="2">
        <text>[protein]-C-terminal L-amino acid-glycyl-phosphatidylethanolamide + H2O = [protein]-C-terminal L-amino acid-glycine + a 1,2-diacyl-sn-glycero-3-phosphoethanolamine</text>
        <dbReference type="Rhea" id="RHEA:67548"/>
        <dbReference type="Rhea" id="RHEA-COMP:17323"/>
        <dbReference type="Rhea" id="RHEA-COMP:17324"/>
        <dbReference type="ChEBI" id="CHEBI:15377"/>
        <dbReference type="ChEBI" id="CHEBI:64612"/>
        <dbReference type="ChEBI" id="CHEBI:172940"/>
        <dbReference type="ChEBI" id="CHEBI:172941"/>
    </reaction>
    <physiologicalReaction direction="left-to-right" evidence="2">
        <dbReference type="Rhea" id="RHEA:67549"/>
    </physiologicalReaction>
</comment>
<comment type="catalytic activity">
    <reaction evidence="2">
        <text>[protein]-C-terminal L-amino acid-glycyl-phosphatidylserine + H2O = [protein]-C-terminal L-amino acid-glycine + a 1,2-diacyl-sn-glycero-3-phospho-L-serine</text>
        <dbReference type="Rhea" id="RHEA:67576"/>
        <dbReference type="Rhea" id="RHEA-COMP:17324"/>
        <dbReference type="Rhea" id="RHEA-COMP:17326"/>
        <dbReference type="ChEBI" id="CHEBI:15377"/>
        <dbReference type="ChEBI" id="CHEBI:57262"/>
        <dbReference type="ChEBI" id="CHEBI:172940"/>
        <dbReference type="ChEBI" id="CHEBI:172942"/>
    </reaction>
    <physiologicalReaction direction="left-to-right" evidence="2">
        <dbReference type="Rhea" id="RHEA:67577"/>
    </physiologicalReaction>
</comment>
<comment type="activity regulation">
    <text evidence="2">Inhibited by N-ethylmaleimide. Redox-regulated during autophagy since reducing conditions activate ATG4A whereas an oxidizing environment such as the presence of H(2)O(2) inhibits its activity. The cysteine protease activity compounds is inhibited by styrylquinoline compounds 4-28 and LV-320.</text>
</comment>
<comment type="subunit">
    <text evidence="1 2">Interacts with PFKP; promoting phosphorylation of ATG4B at Ser-34 (By similarity). Interacts with GBP7 (By similarity).</text>
</comment>
<comment type="subcellular location">
    <subcellularLocation>
        <location evidence="2">Cytoplasm</location>
    </subcellularLocation>
    <subcellularLocation>
        <location evidence="2">Cytoplasm</location>
        <location evidence="2">Cytosol</location>
    </subcellularLocation>
    <subcellularLocation>
        <location evidence="2">Cytoplasmic vesicle</location>
        <location evidence="2">Autophagosome</location>
    </subcellularLocation>
    <subcellularLocation>
        <location evidence="2">Endoplasmic reticulum</location>
    </subcellularLocation>
    <subcellularLocation>
        <location evidence="2">Mitochondrion</location>
    </subcellularLocation>
    <text evidence="2">Mainly localizes to the cytoplasm, including cytosol. A samll potion localizes to mitochondria; phosphorylation at Ser-34 promotes localization to mitochondria.</text>
</comment>
<comment type="alternative products">
    <event type="alternative splicing"/>
    <isoform>
        <id>Q6PZ03-1</id>
        <name>1</name>
        <name evidence="4">Aut2B2</name>
        <sequence type="displayed"/>
    </isoform>
    <isoform>
        <id>Q6PZ03-2</id>
        <name>2</name>
        <name evidence="4">Aut2B1</name>
        <sequence type="described" ref="VSP_013026 VSP_013027"/>
    </isoform>
</comment>
<comment type="domain">
    <text evidence="2">The LIR motif (LC3-interacting region) is required for the interaction with ATG8 family proteins MAP1LC3A, MAP1LC3B, MAP1LC3C and GABARAPL1. Required for proteolytic activation and delipidation of ATG8 proteins.</text>
</comment>
<comment type="PTM">
    <text evidence="2">Phosphorylation at Ser-383 and Ser-392 promotes autophagy by increasing protein delipidation activity without affecting proteolytic activation of ATG8 proteins. Phosphorylation at Ser-316 by ULK1 inhibits autophagy by decreasing both proteolytic activation and delipidation activities. Phosphorylation at Ser-316 is dephosphorylated by protein phosphatase 2A (PP2A). Phosphorylation at Ser-34 by AKT2 promotes its hydrolase activity, leading to increased proteolytic activation and delipidation of ATG8 family proteins. Phosphorylation at Ser-34 by AKT1 promotes mitochondrial localization and inhibition of the F1F0-ATP synthase activity, leading to elevation of mitochondrial reactive oxygen species (ROS).</text>
</comment>
<comment type="PTM">
    <text evidence="2">Ubiquitinated by RNF5, leading to its degradation by the proteasome.</text>
</comment>
<comment type="PTM">
    <text evidence="2">S-nitrosylation at Cys-189 and Cys-292 in response to high glucose decreases both proteolytic activation and delipidation activities.</text>
</comment>
<comment type="PTM">
    <text evidence="2">O-glycosylated by OGT, leading to increase protease activity, thereby promoting the proteolytic activation of ATG8 family proteins.</text>
</comment>
<comment type="PTM">
    <text evidence="2">Forms reversible intrachain disulfide bonds in response to oxidative stress. Forms interchain disulfide bonds, leading to formation of homooligomers in response to oxidation.</text>
</comment>
<comment type="similarity">
    <text evidence="5">Belongs to the peptidase C54 family.</text>
</comment>
<proteinExistence type="evidence at transcript level"/>
<sequence>MDAATLTYDTLRFAEFEDFPETSEPVWILGRKYSVLTEKDEILADVASRLWFTYRKNFPAIGGTGPTSDTGWGCMLRCGQMIFAQALVCRHLGRDWRWTQRKRQPDSYCSVLQAFLDRKDSCYSIHQIAQMGVGEGKSIGQWYGPNTVAQVLKKLAVFDTWSALAVHVAMDNTVVMADIRRLCRSSLPCAGAEAFPADSERHCNGFPAGAEGGGRAAPWRPLVLLIPLRLGLADVNAAYAGTLKHCFRMPQSLGVIGGKPNSAHYFIGYVGEELIYLDPHTTQPAVAAADRCPVPDESFHCQHPPGRMSIAELDPSIAVGFFCETEDDFNDWCQQVSKLSLLGGALPMFELVEQQPSHLACPDVLNLSLDSSDAERLERFFDSEDEDFEILSL</sequence>
<gene>
    <name type="primary">ATG4B</name>
    <name type="synonym">APG4B</name>
    <name type="synonym">AUT2B</name>
</gene>
<keyword id="KW-0007">Acetylation</keyword>
<keyword id="KW-0025">Alternative splicing</keyword>
<keyword id="KW-0072">Autophagy</keyword>
<keyword id="KW-0963">Cytoplasm</keyword>
<keyword id="KW-0968">Cytoplasmic vesicle</keyword>
<keyword id="KW-1015">Disulfide bond</keyword>
<keyword id="KW-0256">Endoplasmic reticulum</keyword>
<keyword id="KW-0325">Glycoprotein</keyword>
<keyword id="KW-0378">Hydrolase</keyword>
<keyword id="KW-1017">Isopeptide bond</keyword>
<keyword id="KW-0496">Mitochondrion</keyword>
<keyword id="KW-0597">Phosphoprotein</keyword>
<keyword id="KW-0645">Protease</keyword>
<keyword id="KW-0653">Protein transport</keyword>
<keyword id="KW-1185">Reference proteome</keyword>
<keyword id="KW-0702">S-nitrosylation</keyword>
<keyword id="KW-0788">Thiol protease</keyword>
<keyword id="KW-0813">Transport</keyword>
<keyword id="KW-0832">Ubl conjugation</keyword>
<keyword id="KW-0833">Ubl conjugation pathway</keyword>
<evidence type="ECO:0000250" key="1">
    <source>
        <dbReference type="UniProtKB" id="Q8BGE6"/>
    </source>
</evidence>
<evidence type="ECO:0000250" key="2">
    <source>
        <dbReference type="UniProtKB" id="Q9Y4P1"/>
    </source>
</evidence>
<evidence type="ECO:0000269" key="3">
    <source>
    </source>
</evidence>
<evidence type="ECO:0000303" key="4">
    <source>
    </source>
</evidence>
<evidence type="ECO:0000305" key="5"/>
<name>ATG4B_BOVIN</name>
<feature type="chain" id="PRO_0000215843" description="Cysteine protease ATG4B">
    <location>
        <begin position="1"/>
        <end position="393"/>
    </location>
</feature>
<feature type="short sequence motif" description="LIR" evidence="2">
    <location>
        <begin position="388"/>
        <end position="391"/>
    </location>
</feature>
<feature type="active site" description="Nucleophile" evidence="2">
    <location>
        <position position="74"/>
    </location>
</feature>
<feature type="active site" evidence="2">
    <location>
        <position position="278"/>
    </location>
</feature>
<feature type="active site" evidence="2">
    <location>
        <position position="280"/>
    </location>
</feature>
<feature type="modified residue" description="N-acetylmethionine" evidence="2">
    <location>
        <position position="1"/>
    </location>
</feature>
<feature type="modified residue" description="Phosphoserine" evidence="2">
    <location>
        <position position="34"/>
    </location>
</feature>
<feature type="modified residue" description="S-nitrosocysteine" evidence="2">
    <location>
        <position position="189"/>
    </location>
</feature>
<feature type="modified residue" description="S-nitrosocysteine" evidence="2">
    <location>
        <position position="292"/>
    </location>
</feature>
<feature type="modified residue" description="S-nitrosocysteine" evidence="2">
    <location>
        <position position="301"/>
    </location>
</feature>
<feature type="modified residue" description="Phosphoserine" evidence="2">
    <location>
        <position position="316"/>
    </location>
</feature>
<feature type="modified residue" description="Phosphoserine" evidence="2">
    <location>
        <position position="383"/>
    </location>
</feature>
<feature type="modified residue" description="Phosphoserine" evidence="2">
    <location>
        <position position="392"/>
    </location>
</feature>
<feature type="disulfide bond" evidence="2">
    <location>
        <begin position="292"/>
        <end position="361"/>
    </location>
</feature>
<feature type="disulfide bond" description="Interchain (with C-361)" evidence="2">
    <location>
        <position position="292"/>
    </location>
</feature>
<feature type="disulfide bond" description="Interchain (with C-292)" evidence="2">
    <location>
        <position position="361"/>
    </location>
</feature>
<feature type="splice variant" id="VSP_013026" description="In isoform 2." evidence="4">
    <original>GFFCETEDDFNDWCQQVSKLSLL</original>
    <variation>VRPPCPAIGAVLLLLQEGGPLLP</variation>
    <location>
        <begin position="320"/>
        <end position="342"/>
    </location>
</feature>
<feature type="splice variant" id="VSP_013027" description="In isoform 2." evidence="4">
    <location>
        <begin position="343"/>
        <end position="393"/>
    </location>
</feature>